<evidence type="ECO:0000250" key="1">
    <source>
        <dbReference type="UniProtKB" id="I3V6A7"/>
    </source>
</evidence>
<evidence type="ECO:0000250" key="2">
    <source>
        <dbReference type="UniProtKB" id="Q5C9L7"/>
    </source>
</evidence>
<evidence type="ECO:0000255" key="3">
    <source>
        <dbReference type="PROSITE-ProRule" id="PRU01020"/>
    </source>
</evidence>
<evidence type="ECO:0000269" key="4">
    <source>
    </source>
</evidence>
<evidence type="ECO:0000269" key="5">
    <source>
    </source>
</evidence>
<evidence type="ECO:0000269" key="6">
    <source>
    </source>
</evidence>
<evidence type="ECO:0000269" key="7">
    <source>
    </source>
</evidence>
<evidence type="ECO:0000269" key="8">
    <source>
    </source>
</evidence>
<evidence type="ECO:0000303" key="9">
    <source>
    </source>
</evidence>
<evidence type="ECO:0000303" key="10">
    <source>
    </source>
</evidence>
<evidence type="ECO:0000303" key="11">
    <source>
    </source>
</evidence>
<evidence type="ECO:0000305" key="12"/>
<evidence type="ECO:0000305" key="13">
    <source>
    </source>
</evidence>
<evidence type="ECO:0000305" key="14">
    <source>
    </source>
</evidence>
<keyword id="KW-0017">Alkaloid metabolism</keyword>
<keyword id="KW-0489">Methyltransferase</keyword>
<keyword id="KW-0949">S-adenosyl-L-methionine</keyword>
<keyword id="KW-0808">Transferase</keyword>
<comment type="function">
    <text evidence="4 6 7 8">Methyltransferase involved in the biosynthesis of the benzylisoquinoline alkaloid noscapine (PubMed:22535422, PubMed:27378283, PubMed:29610307, PubMed:29723437). Catalyzes the conversion of (S)-scoulerine to (S)-tetrahydrocolumbamine (PubMed:22535422).</text>
</comment>
<comment type="catalytic activity">
    <reaction evidence="4">
        <text>(S)-scoulerine + S-adenosyl-L-methionine = (S)-tetrahydrocolumbamine + S-adenosyl-L-homocysteine + H(+)</text>
        <dbReference type="Rhea" id="RHEA:23808"/>
        <dbReference type="ChEBI" id="CHEBI:15378"/>
        <dbReference type="ChEBI" id="CHEBI:17129"/>
        <dbReference type="ChEBI" id="CHEBI:17772"/>
        <dbReference type="ChEBI" id="CHEBI:57856"/>
        <dbReference type="ChEBI" id="CHEBI:59789"/>
        <dbReference type="EC" id="2.1.1.117"/>
    </reaction>
    <physiologicalReaction direction="left-to-right" evidence="13">
        <dbReference type="Rhea" id="RHEA:23809"/>
    </physiologicalReaction>
</comment>
<comment type="biophysicochemical properties">
    <kinetics>
        <KM evidence="4">50.8 uM for (S)-scoulerine</KM>
        <KM evidence="4">101.2 uM for S-adenosyl-L-methionine</KM>
        <Vmax evidence="4">100.3 nmol/min/mg enzyme with (S)-scoulerine as substrate</Vmax>
        <Vmax evidence="4">115.6 nmol/min/mg enzyme with S-adenosyl-L-methionine as substrate</Vmax>
    </kinetics>
</comment>
<comment type="pathway">
    <text evidence="12">Alkaloid biosynthesis.</text>
</comment>
<comment type="subunit">
    <text evidence="6 8">Homodimer (PubMed:29723437). Forms heterodimer with SOMT2 (PubMed:27378283, PubMed:29723437). The heterodimer SOMT2-SOMT3 possesses 3-O-acetyl-4'-O-demethylpapaveroxine 4'-O-methyltransferase activity, where SOMT2 is the catalytic subunit (PubMed:27378283, PubMed:29723437).</text>
</comment>
<comment type="tissue specificity">
    <text evidence="4 5">Highly expressed in capsules (PubMed:22653730). Expressed is stems (PubMed:22535422, PubMed:22653730). Expressed at low levels in roots (PubMed:22535422).</text>
</comment>
<comment type="similarity">
    <text evidence="12">Belongs to the class I-like SAM-binding methyltransferase superfamily. Cation-independent O-methyltransferase family. COMT subfamily.</text>
</comment>
<reference key="1">
    <citation type="journal article" date="2012" name="Plant Physiol.">
        <title>Characterization of three O-methyltransferases involved in noscapine biosynthesis in opium poppy.</title>
        <authorList>
            <person name="Dang T.T."/>
            <person name="Facchini P.J."/>
        </authorList>
    </citation>
    <scope>NUCLEOTIDE SEQUENCE [MRNA]</scope>
    <scope>FUNCTION</scope>
    <scope>CATALYTIC ACTIVITY</scope>
    <scope>BIOPHYSICOCHEMICAL PROPERTIES</scope>
    <scope>TISSUE SPECIFICITY</scope>
</reference>
<reference key="2">
    <citation type="journal article" date="2012" name="Science">
        <title>A Papaver somniferum 10-gene cluster for synthesis of the anticancer alkaloid noscapine.</title>
        <authorList>
            <person name="Winzer T."/>
            <person name="Gazda V."/>
            <person name="He Z."/>
            <person name="Kaminski F."/>
            <person name="Kern M."/>
            <person name="Larson T.R."/>
            <person name="Li Y."/>
            <person name="Meade F."/>
            <person name="Teodor R."/>
            <person name="Vaistij F.E."/>
            <person name="Walker C."/>
            <person name="Bowser T.A."/>
            <person name="Graham I.A."/>
        </authorList>
    </citation>
    <scope>NUCLEOTIDE SEQUENCE [GENOMIC DNA]</scope>
    <scope>TISSUE SPECIFICITY</scope>
</reference>
<reference key="3">
    <citation type="journal article" date="2018" name="Plant J.">
        <title>Heterodimeric O-methyltransferases involved in the biosynthesis of noscapine in opium poppy.</title>
        <authorList>
            <person name="Park M.R."/>
            <person name="Chen X."/>
            <person name="Lang D.E."/>
            <person name="Ng K.K.S."/>
            <person name="Facchini P.J."/>
        </authorList>
    </citation>
    <scope>NUCLEOTIDE SEQUENCE [MRNA]</scope>
    <scope>FUNCTION</scope>
    <scope>ACTIVE SITE</scope>
    <scope>SUBUNIT</scope>
    <source>
        <strain>cv. Bea's Choice</strain>
    </source>
</reference>
<reference key="4">
    <citation type="journal article" date="2016" name="Nat. Commun.">
        <title>Engineering biosynthesis of the anticancer alkaloid noscapine in yeast.</title>
        <authorList>
            <person name="Li Y."/>
            <person name="Smolke C.D."/>
        </authorList>
    </citation>
    <scope>FUNCTION</scope>
    <scope>SUBUNIT</scope>
</reference>
<reference key="5">
    <citation type="journal article" date="2018" name="Proc. Natl. Acad. Sci. U.S.A.">
        <title>Complete biosynthesis of noscapine and halogenated alkaloids in yeast.</title>
        <authorList>
            <person name="Li Y."/>
            <person name="Li S."/>
            <person name="Thodey K."/>
            <person name="Trenchard I."/>
            <person name="Cravens A."/>
            <person name="Smolke C.D."/>
        </authorList>
    </citation>
    <scope>FUNCTION</scope>
</reference>
<feature type="chain" id="PRO_0000447594" description="Scoulerine-9-O-methyltransferase 3">
    <location>
        <begin position="1"/>
        <end position="339"/>
    </location>
</feature>
<feature type="active site" description="Proton acceptor" evidence="3 14">
    <location>
        <position position="246"/>
    </location>
</feature>
<feature type="binding site" evidence="2">
    <location>
        <position position="161"/>
    </location>
    <ligand>
        <name>S-adenosyl-L-methionine</name>
        <dbReference type="ChEBI" id="CHEBI:59789"/>
    </ligand>
</feature>
<feature type="binding site" evidence="2">
    <location>
        <position position="164"/>
    </location>
    <ligand>
        <name>substrate</name>
    </ligand>
</feature>
<feature type="binding site" evidence="2">
    <location>
        <position position="165"/>
    </location>
    <ligand>
        <name>S-adenosyl-L-methionine</name>
        <dbReference type="ChEBI" id="CHEBI:59789"/>
    </ligand>
</feature>
<feature type="binding site" evidence="1">
    <location>
        <position position="191"/>
    </location>
    <ligand>
        <name>S-adenosyl-L-methionine</name>
        <dbReference type="ChEBI" id="CHEBI:59789"/>
    </ligand>
</feature>
<feature type="binding site" evidence="3">
    <location>
        <position position="214"/>
    </location>
    <ligand>
        <name>S-adenosyl-L-methionine</name>
        <dbReference type="ChEBI" id="CHEBI:59789"/>
    </ligand>
</feature>
<feature type="binding site" evidence="1">
    <location>
        <begin position="228"/>
        <end position="229"/>
    </location>
    <ligand>
        <name>S-adenosyl-L-methionine</name>
        <dbReference type="ChEBI" id="CHEBI:59789"/>
    </ligand>
</feature>
<feature type="binding site" evidence="1">
    <location>
        <position position="242"/>
    </location>
    <ligand>
        <name>S-adenosyl-L-methionine</name>
        <dbReference type="ChEBI" id="CHEBI:59789"/>
    </ligand>
</feature>
<feature type="binding site" evidence="2">
    <location>
        <begin position="243"/>
        <end position="247"/>
    </location>
    <ligand>
        <name>substrate</name>
    </ligand>
</feature>
<sequence>MEVVSKIDQENQAKIWKQIFGFAESLVLKCAVQLEIAETLHNNVKPMSLSELASKLPAQPVNEDRLYRILHFLVHMKLFNKDATTQKYSLAPPAKYLLKGWEKSMVPSILSVTDKDFTAPWNHLGDGLTGNCNAFEKALGKGIRVYMRENPEKDQLFNEGMACDTRLFASALVNECKSIFSDGINTLAGVGRGTGTAVKAISKAFPDIKCTIHDLPEVTSKNSKIPRDVFKSVPSADAIFMKSILHEWNDEECIQILKRCKEAIPKGGKVIIADVVIDMDSTHPYSKSRLAMDLAMMLHTGGKERTEEDWKKLIDAAGFASCKITKLSALQSVIEAYPH</sequence>
<gene>
    <name evidence="9" type="primary">SOMT3</name>
    <name evidence="11" type="synonym">OMT3</name>
    <name evidence="10" type="synonym">PSMT3</name>
</gene>
<proteinExistence type="evidence at protein level"/>
<name>SOMT3_PAPSO</name>
<accession>I3PLQ7</accession>
<dbReference type="EC" id="2.1.1.117" evidence="4"/>
<dbReference type="EMBL" id="JN185325">
    <property type="protein sequence ID" value="AFK73711.1"/>
    <property type="molecule type" value="mRNA"/>
</dbReference>
<dbReference type="EMBL" id="JQ659001">
    <property type="protein sequence ID" value="AFB74613.1"/>
    <property type="molecule type" value="Genomic_DNA"/>
</dbReference>
<dbReference type="EMBL" id="MH029294">
    <property type="protein sequence ID" value="AWJ64118.1"/>
    <property type="molecule type" value="mRNA"/>
</dbReference>
<dbReference type="SMR" id="I3PLQ7"/>
<dbReference type="EnsemblPlants" id="RZC84734">
    <property type="protein sequence ID" value="RZC84734"/>
    <property type="gene ID" value="C5167_047519"/>
</dbReference>
<dbReference type="Gramene" id="RZC84734">
    <property type="protein sequence ID" value="RZC84734"/>
    <property type="gene ID" value="C5167_047519"/>
</dbReference>
<dbReference type="OMA" id="HEWNDEE"/>
<dbReference type="OrthoDB" id="1606438at2759"/>
<dbReference type="BioCyc" id="MetaCyc:MONOMER-17767"/>
<dbReference type="GO" id="GO:0030777">
    <property type="term" value="F:(S)-scoulerine 9-O-methyltransferase activity"/>
    <property type="evidence" value="ECO:0007669"/>
    <property type="project" value="UniProtKB-EC"/>
</dbReference>
<dbReference type="GO" id="GO:0008171">
    <property type="term" value="F:O-methyltransferase activity"/>
    <property type="evidence" value="ECO:0007669"/>
    <property type="project" value="InterPro"/>
</dbReference>
<dbReference type="GO" id="GO:0046983">
    <property type="term" value="F:protein dimerization activity"/>
    <property type="evidence" value="ECO:0007669"/>
    <property type="project" value="InterPro"/>
</dbReference>
<dbReference type="GO" id="GO:0009820">
    <property type="term" value="P:alkaloid metabolic process"/>
    <property type="evidence" value="ECO:0007669"/>
    <property type="project" value="UniProtKB-KW"/>
</dbReference>
<dbReference type="GO" id="GO:0032259">
    <property type="term" value="P:methylation"/>
    <property type="evidence" value="ECO:0007669"/>
    <property type="project" value="UniProtKB-KW"/>
</dbReference>
<dbReference type="Gene3D" id="3.40.50.150">
    <property type="entry name" value="Vaccinia Virus protein VP39"/>
    <property type="match status" value="1"/>
</dbReference>
<dbReference type="Gene3D" id="1.10.10.10">
    <property type="entry name" value="Winged helix-like DNA-binding domain superfamily/Winged helix DNA-binding domain"/>
    <property type="match status" value="1"/>
</dbReference>
<dbReference type="InterPro" id="IPR016461">
    <property type="entry name" value="COMT-like"/>
</dbReference>
<dbReference type="InterPro" id="IPR001077">
    <property type="entry name" value="O_MeTrfase_dom"/>
</dbReference>
<dbReference type="InterPro" id="IPR012967">
    <property type="entry name" value="Plant_O-MeTrfase_dimerisation"/>
</dbReference>
<dbReference type="InterPro" id="IPR029063">
    <property type="entry name" value="SAM-dependent_MTases_sf"/>
</dbReference>
<dbReference type="InterPro" id="IPR036388">
    <property type="entry name" value="WH-like_DNA-bd_sf"/>
</dbReference>
<dbReference type="InterPro" id="IPR036390">
    <property type="entry name" value="WH_DNA-bd_sf"/>
</dbReference>
<dbReference type="PANTHER" id="PTHR11746">
    <property type="entry name" value="O-METHYLTRANSFERASE"/>
    <property type="match status" value="1"/>
</dbReference>
<dbReference type="Pfam" id="PF08100">
    <property type="entry name" value="Dimerisation"/>
    <property type="match status" value="1"/>
</dbReference>
<dbReference type="Pfam" id="PF00891">
    <property type="entry name" value="Methyltransf_2"/>
    <property type="match status" value="1"/>
</dbReference>
<dbReference type="PIRSF" id="PIRSF005739">
    <property type="entry name" value="O-mtase"/>
    <property type="match status" value="1"/>
</dbReference>
<dbReference type="SUPFAM" id="SSF53335">
    <property type="entry name" value="S-adenosyl-L-methionine-dependent methyltransferases"/>
    <property type="match status" value="1"/>
</dbReference>
<dbReference type="SUPFAM" id="SSF46785">
    <property type="entry name" value="Winged helix' DNA-binding domain"/>
    <property type="match status" value="1"/>
</dbReference>
<dbReference type="PROSITE" id="PS51683">
    <property type="entry name" value="SAM_OMT_II"/>
    <property type="match status" value="1"/>
</dbReference>
<protein>
    <recommendedName>
        <fullName evidence="9">Scoulerine-9-O-methyltransferase 3</fullName>
        <shortName evidence="9">PsSOMT3</shortName>
        <ecNumber evidence="4">2.1.1.117</ecNumber>
    </recommendedName>
    <alternativeName>
        <fullName evidence="10">O-methyltransferase 3</fullName>
    </alternativeName>
</protein>
<organism>
    <name type="scientific">Papaver somniferum</name>
    <name type="common">Opium poppy</name>
    <dbReference type="NCBI Taxonomy" id="3469"/>
    <lineage>
        <taxon>Eukaryota</taxon>
        <taxon>Viridiplantae</taxon>
        <taxon>Streptophyta</taxon>
        <taxon>Embryophyta</taxon>
        <taxon>Tracheophyta</taxon>
        <taxon>Spermatophyta</taxon>
        <taxon>Magnoliopsida</taxon>
        <taxon>Ranunculales</taxon>
        <taxon>Papaveraceae</taxon>
        <taxon>Papaveroideae</taxon>
        <taxon>Papaver</taxon>
    </lineage>
</organism>